<gene>
    <name evidence="1" type="primary">rbsA</name>
    <name type="ordered locus">Cgl1252</name>
    <name type="ordered locus">cg1411</name>
</gene>
<protein>
    <recommendedName>
        <fullName evidence="1">Ribose import ATP-binding protein RbsA</fullName>
        <ecNumber evidence="1">7.5.2.7</ecNumber>
    </recommendedName>
</protein>
<comment type="function">
    <text evidence="1">Part of the ABC transporter complex RbsABC involved in ribose import. Responsible for energy coupling to the transport system.</text>
</comment>
<comment type="catalytic activity">
    <reaction evidence="1">
        <text>D-ribose(out) + ATP + H2O = D-ribose(in) + ADP + phosphate + H(+)</text>
        <dbReference type="Rhea" id="RHEA:29903"/>
        <dbReference type="ChEBI" id="CHEBI:15377"/>
        <dbReference type="ChEBI" id="CHEBI:15378"/>
        <dbReference type="ChEBI" id="CHEBI:30616"/>
        <dbReference type="ChEBI" id="CHEBI:43474"/>
        <dbReference type="ChEBI" id="CHEBI:47013"/>
        <dbReference type="ChEBI" id="CHEBI:456216"/>
        <dbReference type="EC" id="7.5.2.7"/>
    </reaction>
</comment>
<comment type="subunit">
    <text evidence="1">The complex is composed of an ATP-binding protein (RbsA), two transmembrane proteins (RbsC) and a solute-binding protein (RbsB).</text>
</comment>
<comment type="subcellular location">
    <subcellularLocation>
        <location evidence="1">Cell membrane</location>
        <topology evidence="1">Peripheral membrane protein</topology>
    </subcellularLocation>
</comment>
<comment type="similarity">
    <text evidence="1">Belongs to the ABC transporter superfamily. Ribose importer (TC 3.A.1.2.1) family.</text>
</comment>
<evidence type="ECO:0000255" key="1">
    <source>
        <dbReference type="HAMAP-Rule" id="MF_01716"/>
    </source>
</evidence>
<organism>
    <name type="scientific">Corynebacterium glutamicum (strain ATCC 13032 / DSM 20300 / JCM 1318 / BCRC 11384 / CCUG 27702 / LMG 3730 / NBRC 12168 / NCIMB 10025 / NRRL B-2784 / 534)</name>
    <dbReference type="NCBI Taxonomy" id="196627"/>
    <lineage>
        <taxon>Bacteria</taxon>
        <taxon>Bacillati</taxon>
        <taxon>Actinomycetota</taxon>
        <taxon>Actinomycetes</taxon>
        <taxon>Mycobacteriales</taxon>
        <taxon>Corynebacteriaceae</taxon>
        <taxon>Corynebacterium</taxon>
    </lineage>
</organism>
<name>RBSA_CORGL</name>
<proteinExistence type="inferred from homology"/>
<sequence length="524" mass="55917">MVNSEQALHQHDPAPILQLDKVSKSFGPVNVINQVSIDVRPGRVLALLGENGAGKSTLIKMMSGVYQPDGGQILVDGKPTTLPDTKTAESFGIATIHQELNLVPTMTVAENVMLGRTPRKWGLVNFKHLRRQAQAALDLIGVDVDLNAQVGSLGIARQQMVEIAKALSMNARILILDEPTAALTGREIDQLFKVVDQLKEKGVAMVFISHHLDEIARIGDTVSVLRDGQFIAELPADTDEDELVRLMVGRSIENQYPRSAPEIGQPLLEVKNLNAEGRFTDISLTVRAGEVVGLAGLVGAGRTEVVRSIAGVDKVDSGEVIVAGKKLRGGDISEAIKNGIGHIPEDRKAQGLVLGSSVEDNLGLATLASTARAGLVDRSGQHKRAAEVAEKLRIRMASLKQPISDLSGGNQQKAVFGRWVLAGSNVLLLDEPTRGVDVGAKVEIYNIINEMTEKGGAVLMVSSELPEVLGMADRILVMSGGRIAGELPAKGTTQDDVMALAVSQVDDSITEEAAAEIENTKEDR</sequence>
<keyword id="KW-0067">ATP-binding</keyword>
<keyword id="KW-1003">Cell membrane</keyword>
<keyword id="KW-0472">Membrane</keyword>
<keyword id="KW-0547">Nucleotide-binding</keyword>
<keyword id="KW-1185">Reference proteome</keyword>
<keyword id="KW-0677">Repeat</keyword>
<keyword id="KW-0762">Sugar transport</keyword>
<keyword id="KW-1278">Translocase</keyword>
<keyword id="KW-0813">Transport</keyword>
<dbReference type="EC" id="7.5.2.7" evidence="1"/>
<dbReference type="EMBL" id="BA000036">
    <property type="protein sequence ID" value="BAB98645.1"/>
    <property type="molecule type" value="Genomic_DNA"/>
</dbReference>
<dbReference type="EMBL" id="BX927151">
    <property type="protein sequence ID" value="CAF19955.1"/>
    <property type="molecule type" value="Genomic_DNA"/>
</dbReference>
<dbReference type="RefSeq" id="NP_600475.1">
    <property type="nucleotide sequence ID" value="NC_003450.3"/>
</dbReference>
<dbReference type="RefSeq" id="WP_011014233.1">
    <property type="nucleotide sequence ID" value="NC_006958.1"/>
</dbReference>
<dbReference type="SMR" id="Q8NR12"/>
<dbReference type="STRING" id="196627.cg1411"/>
<dbReference type="KEGG" id="cgb:cg1411"/>
<dbReference type="KEGG" id="cgl:Cgl1252"/>
<dbReference type="PATRIC" id="fig|196627.13.peg.1229"/>
<dbReference type="eggNOG" id="COG1129">
    <property type="taxonomic scope" value="Bacteria"/>
</dbReference>
<dbReference type="HOGENOM" id="CLU_000604_92_3_11"/>
<dbReference type="OrthoDB" id="7757085at2"/>
<dbReference type="BioCyc" id="CORYNE:G18NG-10825-MONOMER"/>
<dbReference type="Proteomes" id="UP000000582">
    <property type="component" value="Chromosome"/>
</dbReference>
<dbReference type="Proteomes" id="UP000001009">
    <property type="component" value="Chromosome"/>
</dbReference>
<dbReference type="GO" id="GO:0005886">
    <property type="term" value="C:plasma membrane"/>
    <property type="evidence" value="ECO:0007669"/>
    <property type="project" value="UniProtKB-SubCell"/>
</dbReference>
<dbReference type="GO" id="GO:0015611">
    <property type="term" value="F:ABC-type D-ribose transporter activity"/>
    <property type="evidence" value="ECO:0007669"/>
    <property type="project" value="UniProtKB-EC"/>
</dbReference>
<dbReference type="GO" id="GO:0005524">
    <property type="term" value="F:ATP binding"/>
    <property type="evidence" value="ECO:0007669"/>
    <property type="project" value="UniProtKB-KW"/>
</dbReference>
<dbReference type="GO" id="GO:0016887">
    <property type="term" value="F:ATP hydrolysis activity"/>
    <property type="evidence" value="ECO:0007669"/>
    <property type="project" value="InterPro"/>
</dbReference>
<dbReference type="CDD" id="cd03216">
    <property type="entry name" value="ABC_Carb_Monos_I"/>
    <property type="match status" value="1"/>
</dbReference>
<dbReference type="CDD" id="cd03215">
    <property type="entry name" value="ABC_Carb_Monos_II"/>
    <property type="match status" value="1"/>
</dbReference>
<dbReference type="FunFam" id="3.40.50.300:FF:000127">
    <property type="entry name" value="Ribose import ATP-binding protein RbsA"/>
    <property type="match status" value="1"/>
</dbReference>
<dbReference type="Gene3D" id="3.40.50.300">
    <property type="entry name" value="P-loop containing nucleotide triphosphate hydrolases"/>
    <property type="match status" value="2"/>
</dbReference>
<dbReference type="InterPro" id="IPR003593">
    <property type="entry name" value="AAA+_ATPase"/>
</dbReference>
<dbReference type="InterPro" id="IPR050107">
    <property type="entry name" value="ABC_carbohydrate_import_ATPase"/>
</dbReference>
<dbReference type="InterPro" id="IPR003439">
    <property type="entry name" value="ABC_transporter-like_ATP-bd"/>
</dbReference>
<dbReference type="InterPro" id="IPR017871">
    <property type="entry name" value="ABC_transporter-like_CS"/>
</dbReference>
<dbReference type="InterPro" id="IPR027417">
    <property type="entry name" value="P-loop_NTPase"/>
</dbReference>
<dbReference type="PANTHER" id="PTHR43790">
    <property type="entry name" value="CARBOHYDRATE TRANSPORT ATP-BINDING PROTEIN MG119-RELATED"/>
    <property type="match status" value="1"/>
</dbReference>
<dbReference type="PANTHER" id="PTHR43790:SF9">
    <property type="entry name" value="GALACTOFURANOSE TRANSPORTER ATP-BINDING PROTEIN YTFR"/>
    <property type="match status" value="1"/>
</dbReference>
<dbReference type="Pfam" id="PF00005">
    <property type="entry name" value="ABC_tran"/>
    <property type="match status" value="2"/>
</dbReference>
<dbReference type="SMART" id="SM00382">
    <property type="entry name" value="AAA"/>
    <property type="match status" value="2"/>
</dbReference>
<dbReference type="SUPFAM" id="SSF52540">
    <property type="entry name" value="P-loop containing nucleoside triphosphate hydrolases"/>
    <property type="match status" value="2"/>
</dbReference>
<dbReference type="PROSITE" id="PS00211">
    <property type="entry name" value="ABC_TRANSPORTER_1"/>
    <property type="match status" value="1"/>
</dbReference>
<dbReference type="PROSITE" id="PS50893">
    <property type="entry name" value="ABC_TRANSPORTER_2"/>
    <property type="match status" value="2"/>
</dbReference>
<dbReference type="PROSITE" id="PS51254">
    <property type="entry name" value="RBSA"/>
    <property type="match status" value="1"/>
</dbReference>
<feature type="chain" id="PRO_0000261060" description="Ribose import ATP-binding protein RbsA">
    <location>
        <begin position="1"/>
        <end position="524"/>
    </location>
</feature>
<feature type="domain" description="ABC transporter 1" evidence="1">
    <location>
        <begin position="17"/>
        <end position="252"/>
    </location>
</feature>
<feature type="domain" description="ABC transporter 2" evidence="1">
    <location>
        <begin position="263"/>
        <end position="505"/>
    </location>
</feature>
<feature type="binding site" evidence="1">
    <location>
        <begin position="49"/>
        <end position="56"/>
    </location>
    <ligand>
        <name>ATP</name>
        <dbReference type="ChEBI" id="CHEBI:30616"/>
    </ligand>
</feature>
<accession>Q8NR12</accession>
<accession>Q6M5T6</accession>
<reference key="1">
    <citation type="journal article" date="2003" name="Appl. Microbiol. Biotechnol.">
        <title>The Corynebacterium glutamicum genome: features and impacts on biotechnological processes.</title>
        <authorList>
            <person name="Ikeda M."/>
            <person name="Nakagawa S."/>
        </authorList>
    </citation>
    <scope>NUCLEOTIDE SEQUENCE [LARGE SCALE GENOMIC DNA]</scope>
    <source>
        <strain>ATCC 13032 / DSM 20300 / JCM 1318 / BCRC 11384 / CCUG 27702 / LMG 3730 / NBRC 12168 / NCIMB 10025 / NRRL B-2784 / 534</strain>
    </source>
</reference>
<reference key="2">
    <citation type="journal article" date="2003" name="J. Biotechnol.">
        <title>The complete Corynebacterium glutamicum ATCC 13032 genome sequence and its impact on the production of L-aspartate-derived amino acids and vitamins.</title>
        <authorList>
            <person name="Kalinowski J."/>
            <person name="Bathe B."/>
            <person name="Bartels D."/>
            <person name="Bischoff N."/>
            <person name="Bott M."/>
            <person name="Burkovski A."/>
            <person name="Dusch N."/>
            <person name="Eggeling L."/>
            <person name="Eikmanns B.J."/>
            <person name="Gaigalat L."/>
            <person name="Goesmann A."/>
            <person name="Hartmann M."/>
            <person name="Huthmacher K."/>
            <person name="Kraemer R."/>
            <person name="Linke B."/>
            <person name="McHardy A.C."/>
            <person name="Meyer F."/>
            <person name="Moeckel B."/>
            <person name="Pfefferle W."/>
            <person name="Puehler A."/>
            <person name="Rey D.A."/>
            <person name="Rueckert C."/>
            <person name="Rupp O."/>
            <person name="Sahm H."/>
            <person name="Wendisch V.F."/>
            <person name="Wiegraebe I."/>
            <person name="Tauch A."/>
        </authorList>
    </citation>
    <scope>NUCLEOTIDE SEQUENCE [LARGE SCALE GENOMIC DNA]</scope>
    <source>
        <strain>ATCC 13032 / DSM 20300 / JCM 1318 / BCRC 11384 / CCUG 27702 / LMG 3730 / NBRC 12168 / NCIMB 10025 / NRRL B-2784 / 534</strain>
    </source>
</reference>